<gene>
    <name evidence="1" type="primary">rpmA</name>
    <name type="ordered locus">Shewana3_3218</name>
</gene>
<sequence>MAHKKAGGSTRNGRDSESKRLGVKRFGGESVLAGNIIVRQRGTKFHAGVNVGIGRDHTLFALTDGKVKFEVKGPNNRKFISIEA</sequence>
<name>RL27_SHESA</name>
<reference key="1">
    <citation type="submission" date="2006-09" db="EMBL/GenBank/DDBJ databases">
        <title>Complete sequence of chromosome 1 of Shewanella sp. ANA-3.</title>
        <authorList>
            <person name="Copeland A."/>
            <person name="Lucas S."/>
            <person name="Lapidus A."/>
            <person name="Barry K."/>
            <person name="Detter J.C."/>
            <person name="Glavina del Rio T."/>
            <person name="Hammon N."/>
            <person name="Israni S."/>
            <person name="Dalin E."/>
            <person name="Tice H."/>
            <person name="Pitluck S."/>
            <person name="Chertkov O."/>
            <person name="Brettin T."/>
            <person name="Bruce D."/>
            <person name="Han C."/>
            <person name="Tapia R."/>
            <person name="Gilna P."/>
            <person name="Schmutz J."/>
            <person name="Larimer F."/>
            <person name="Land M."/>
            <person name="Hauser L."/>
            <person name="Kyrpides N."/>
            <person name="Kim E."/>
            <person name="Newman D."/>
            <person name="Salticov C."/>
            <person name="Konstantinidis K."/>
            <person name="Klappenback J."/>
            <person name="Tiedje J."/>
            <person name="Richardson P."/>
        </authorList>
    </citation>
    <scope>NUCLEOTIDE SEQUENCE [LARGE SCALE GENOMIC DNA]</scope>
    <source>
        <strain>ANA-3</strain>
    </source>
</reference>
<protein>
    <recommendedName>
        <fullName evidence="1">Large ribosomal subunit protein bL27</fullName>
    </recommendedName>
    <alternativeName>
        <fullName evidence="3">50S ribosomal protein L27</fullName>
    </alternativeName>
</protein>
<proteinExistence type="inferred from homology"/>
<dbReference type="EMBL" id="CP000469">
    <property type="protein sequence ID" value="ABK49442.1"/>
    <property type="molecule type" value="Genomic_DNA"/>
</dbReference>
<dbReference type="RefSeq" id="WP_007650346.1">
    <property type="nucleotide sequence ID" value="NC_008577.1"/>
</dbReference>
<dbReference type="SMR" id="A0L073"/>
<dbReference type="STRING" id="94122.Shewana3_3218"/>
<dbReference type="GeneID" id="94729146"/>
<dbReference type="KEGG" id="shn:Shewana3_3218"/>
<dbReference type="eggNOG" id="COG0211">
    <property type="taxonomic scope" value="Bacteria"/>
</dbReference>
<dbReference type="HOGENOM" id="CLU_095424_4_1_6"/>
<dbReference type="OrthoDB" id="9803474at2"/>
<dbReference type="Proteomes" id="UP000002589">
    <property type="component" value="Chromosome"/>
</dbReference>
<dbReference type="GO" id="GO:0022625">
    <property type="term" value="C:cytosolic large ribosomal subunit"/>
    <property type="evidence" value="ECO:0007669"/>
    <property type="project" value="TreeGrafter"/>
</dbReference>
<dbReference type="GO" id="GO:0003735">
    <property type="term" value="F:structural constituent of ribosome"/>
    <property type="evidence" value="ECO:0007669"/>
    <property type="project" value="InterPro"/>
</dbReference>
<dbReference type="GO" id="GO:0006412">
    <property type="term" value="P:translation"/>
    <property type="evidence" value="ECO:0007669"/>
    <property type="project" value="UniProtKB-UniRule"/>
</dbReference>
<dbReference type="FunFam" id="2.40.50.100:FF:000001">
    <property type="entry name" value="50S ribosomal protein L27"/>
    <property type="match status" value="1"/>
</dbReference>
<dbReference type="Gene3D" id="2.40.50.100">
    <property type="match status" value="1"/>
</dbReference>
<dbReference type="HAMAP" id="MF_00539">
    <property type="entry name" value="Ribosomal_bL27"/>
    <property type="match status" value="1"/>
</dbReference>
<dbReference type="InterPro" id="IPR001684">
    <property type="entry name" value="Ribosomal_bL27"/>
</dbReference>
<dbReference type="InterPro" id="IPR018261">
    <property type="entry name" value="Ribosomal_bL27_CS"/>
</dbReference>
<dbReference type="NCBIfam" id="TIGR00062">
    <property type="entry name" value="L27"/>
    <property type="match status" value="1"/>
</dbReference>
<dbReference type="PANTHER" id="PTHR15893:SF0">
    <property type="entry name" value="LARGE RIBOSOMAL SUBUNIT PROTEIN BL27M"/>
    <property type="match status" value="1"/>
</dbReference>
<dbReference type="PANTHER" id="PTHR15893">
    <property type="entry name" value="RIBOSOMAL PROTEIN L27"/>
    <property type="match status" value="1"/>
</dbReference>
<dbReference type="Pfam" id="PF01016">
    <property type="entry name" value="Ribosomal_L27"/>
    <property type="match status" value="1"/>
</dbReference>
<dbReference type="PRINTS" id="PR00063">
    <property type="entry name" value="RIBOSOMALL27"/>
</dbReference>
<dbReference type="SUPFAM" id="SSF110324">
    <property type="entry name" value="Ribosomal L27 protein-like"/>
    <property type="match status" value="1"/>
</dbReference>
<dbReference type="PROSITE" id="PS00831">
    <property type="entry name" value="RIBOSOMAL_L27"/>
    <property type="match status" value="1"/>
</dbReference>
<accession>A0L073</accession>
<evidence type="ECO:0000255" key="1">
    <source>
        <dbReference type="HAMAP-Rule" id="MF_00539"/>
    </source>
</evidence>
<evidence type="ECO:0000256" key="2">
    <source>
        <dbReference type="SAM" id="MobiDB-lite"/>
    </source>
</evidence>
<evidence type="ECO:0000305" key="3"/>
<feature type="chain" id="PRO_1000017603" description="Large ribosomal subunit protein bL27">
    <location>
        <begin position="1"/>
        <end position="84"/>
    </location>
</feature>
<feature type="region of interest" description="Disordered" evidence="2">
    <location>
        <begin position="1"/>
        <end position="22"/>
    </location>
</feature>
<organism>
    <name type="scientific">Shewanella sp. (strain ANA-3)</name>
    <dbReference type="NCBI Taxonomy" id="94122"/>
    <lineage>
        <taxon>Bacteria</taxon>
        <taxon>Pseudomonadati</taxon>
        <taxon>Pseudomonadota</taxon>
        <taxon>Gammaproteobacteria</taxon>
        <taxon>Alteromonadales</taxon>
        <taxon>Shewanellaceae</taxon>
        <taxon>Shewanella</taxon>
    </lineage>
</organism>
<keyword id="KW-0687">Ribonucleoprotein</keyword>
<keyword id="KW-0689">Ribosomal protein</keyword>
<comment type="similarity">
    <text evidence="1">Belongs to the bacterial ribosomal protein bL27 family.</text>
</comment>